<reference key="1">
    <citation type="journal article" date="1996" name="Microbiology">
        <title>Systematic sequencing of the 283 kb 210 degrees-232 degrees region of the Bacillus subtilis genome containing the skin element and many sporulation genes.</title>
        <authorList>
            <person name="Mizuno M."/>
            <person name="Masuda S."/>
            <person name="Takemaru K."/>
            <person name="Hosono S."/>
            <person name="Sato T."/>
            <person name="Takeuchi M."/>
            <person name="Kobayashi Y."/>
        </authorList>
    </citation>
    <scope>NUCLEOTIDE SEQUENCE [GENOMIC DNA]</scope>
    <source>
        <strain>168 / JH642</strain>
    </source>
</reference>
<reference key="2">
    <citation type="journal article" date="1997" name="Nature">
        <title>The complete genome sequence of the Gram-positive bacterium Bacillus subtilis.</title>
        <authorList>
            <person name="Kunst F."/>
            <person name="Ogasawara N."/>
            <person name="Moszer I."/>
            <person name="Albertini A.M."/>
            <person name="Alloni G."/>
            <person name="Azevedo V."/>
            <person name="Bertero M.G."/>
            <person name="Bessieres P."/>
            <person name="Bolotin A."/>
            <person name="Borchert S."/>
            <person name="Borriss R."/>
            <person name="Boursier L."/>
            <person name="Brans A."/>
            <person name="Braun M."/>
            <person name="Brignell S.C."/>
            <person name="Bron S."/>
            <person name="Brouillet S."/>
            <person name="Bruschi C.V."/>
            <person name="Caldwell B."/>
            <person name="Capuano V."/>
            <person name="Carter N.M."/>
            <person name="Choi S.-K."/>
            <person name="Codani J.-J."/>
            <person name="Connerton I.F."/>
            <person name="Cummings N.J."/>
            <person name="Daniel R.A."/>
            <person name="Denizot F."/>
            <person name="Devine K.M."/>
            <person name="Duesterhoeft A."/>
            <person name="Ehrlich S.D."/>
            <person name="Emmerson P.T."/>
            <person name="Entian K.-D."/>
            <person name="Errington J."/>
            <person name="Fabret C."/>
            <person name="Ferrari E."/>
            <person name="Foulger D."/>
            <person name="Fritz C."/>
            <person name="Fujita M."/>
            <person name="Fujita Y."/>
            <person name="Fuma S."/>
            <person name="Galizzi A."/>
            <person name="Galleron N."/>
            <person name="Ghim S.-Y."/>
            <person name="Glaser P."/>
            <person name="Goffeau A."/>
            <person name="Golightly E.J."/>
            <person name="Grandi G."/>
            <person name="Guiseppi G."/>
            <person name="Guy B.J."/>
            <person name="Haga K."/>
            <person name="Haiech J."/>
            <person name="Harwood C.R."/>
            <person name="Henaut A."/>
            <person name="Hilbert H."/>
            <person name="Holsappel S."/>
            <person name="Hosono S."/>
            <person name="Hullo M.-F."/>
            <person name="Itaya M."/>
            <person name="Jones L.-M."/>
            <person name="Joris B."/>
            <person name="Karamata D."/>
            <person name="Kasahara Y."/>
            <person name="Klaerr-Blanchard M."/>
            <person name="Klein C."/>
            <person name="Kobayashi Y."/>
            <person name="Koetter P."/>
            <person name="Koningstein G."/>
            <person name="Krogh S."/>
            <person name="Kumano M."/>
            <person name="Kurita K."/>
            <person name="Lapidus A."/>
            <person name="Lardinois S."/>
            <person name="Lauber J."/>
            <person name="Lazarevic V."/>
            <person name="Lee S.-M."/>
            <person name="Levine A."/>
            <person name="Liu H."/>
            <person name="Masuda S."/>
            <person name="Mauel C."/>
            <person name="Medigue C."/>
            <person name="Medina N."/>
            <person name="Mellado R.P."/>
            <person name="Mizuno M."/>
            <person name="Moestl D."/>
            <person name="Nakai S."/>
            <person name="Noback M."/>
            <person name="Noone D."/>
            <person name="O'Reilly M."/>
            <person name="Ogawa K."/>
            <person name="Ogiwara A."/>
            <person name="Oudega B."/>
            <person name="Park S.-H."/>
            <person name="Parro V."/>
            <person name="Pohl T.M."/>
            <person name="Portetelle D."/>
            <person name="Porwollik S."/>
            <person name="Prescott A.M."/>
            <person name="Presecan E."/>
            <person name="Pujic P."/>
            <person name="Purnelle B."/>
            <person name="Rapoport G."/>
            <person name="Rey M."/>
            <person name="Reynolds S."/>
            <person name="Rieger M."/>
            <person name="Rivolta C."/>
            <person name="Rocha E."/>
            <person name="Roche B."/>
            <person name="Rose M."/>
            <person name="Sadaie Y."/>
            <person name="Sato T."/>
            <person name="Scanlan E."/>
            <person name="Schleich S."/>
            <person name="Schroeter R."/>
            <person name="Scoffone F."/>
            <person name="Sekiguchi J."/>
            <person name="Sekowska A."/>
            <person name="Seror S.J."/>
            <person name="Serror P."/>
            <person name="Shin B.-S."/>
            <person name="Soldo B."/>
            <person name="Sorokin A."/>
            <person name="Tacconi E."/>
            <person name="Takagi T."/>
            <person name="Takahashi H."/>
            <person name="Takemaru K."/>
            <person name="Takeuchi M."/>
            <person name="Tamakoshi A."/>
            <person name="Tanaka T."/>
            <person name="Terpstra P."/>
            <person name="Tognoni A."/>
            <person name="Tosato V."/>
            <person name="Uchiyama S."/>
            <person name="Vandenbol M."/>
            <person name="Vannier F."/>
            <person name="Vassarotti A."/>
            <person name="Viari A."/>
            <person name="Wambutt R."/>
            <person name="Wedler E."/>
            <person name="Wedler H."/>
            <person name="Weitzenegger T."/>
            <person name="Winters P."/>
            <person name="Wipat A."/>
            <person name="Yamamoto H."/>
            <person name="Yamane K."/>
            <person name="Yasumoto K."/>
            <person name="Yata K."/>
            <person name="Yoshida K."/>
            <person name="Yoshikawa H.-F."/>
            <person name="Zumstein E."/>
            <person name="Yoshikawa H."/>
            <person name="Danchin A."/>
        </authorList>
    </citation>
    <scope>NUCLEOTIDE SEQUENCE [LARGE SCALE GENOMIC DNA]</scope>
    <source>
        <strain>168</strain>
    </source>
</reference>
<feature type="chain" id="PRO_0000192360" description="Probable metallo-hydrolase YqgX">
    <location>
        <begin position="1"/>
        <end position="211"/>
    </location>
</feature>
<feature type="binding site" evidence="1">
    <location>
        <position position="54"/>
    </location>
    <ligand>
        <name>Zn(2+)</name>
        <dbReference type="ChEBI" id="CHEBI:29105"/>
        <label>1</label>
    </ligand>
</feature>
<feature type="binding site" evidence="1">
    <location>
        <position position="56"/>
    </location>
    <ligand>
        <name>Zn(2+)</name>
        <dbReference type="ChEBI" id="CHEBI:29105"/>
        <label>1</label>
    </ligand>
</feature>
<feature type="binding site" evidence="1">
    <location>
        <position position="58"/>
    </location>
    <ligand>
        <name>Zn(2+)</name>
        <dbReference type="ChEBI" id="CHEBI:29105"/>
        <label>2</label>
    </ligand>
</feature>
<feature type="binding site" evidence="1">
    <location>
        <position position="59"/>
    </location>
    <ligand>
        <name>Zn(2+)</name>
        <dbReference type="ChEBI" id="CHEBI:29105"/>
        <label>2</label>
    </ligand>
</feature>
<feature type="binding site" evidence="1">
    <location>
        <position position="130"/>
    </location>
    <ligand>
        <name>Zn(2+)</name>
        <dbReference type="ChEBI" id="CHEBI:29105"/>
        <label>1</label>
    </ligand>
</feature>
<feature type="binding site" evidence="1">
    <location>
        <position position="149"/>
    </location>
    <ligand>
        <name>Zn(2+)</name>
        <dbReference type="ChEBI" id="CHEBI:29105"/>
        <label>1</label>
    </ligand>
</feature>
<feature type="binding site" evidence="1">
    <location>
        <position position="149"/>
    </location>
    <ligand>
        <name>Zn(2+)</name>
        <dbReference type="ChEBI" id="CHEBI:29105"/>
        <label>2</label>
    </ligand>
</feature>
<feature type="binding site" evidence="1">
    <location>
        <position position="190"/>
    </location>
    <ligand>
        <name>Zn(2+)</name>
        <dbReference type="ChEBI" id="CHEBI:29105"/>
        <label>2</label>
    </ligand>
</feature>
<sequence length="211" mass="23225">MKWRRMPVGPIQANAYFLISDDQCLIFDPGGEGHKINQYIKEKGLTPLAILLTHAHFDHIGALDEVREKWDIPVYLHQNEKNWLADASLNGSGMLRGIEVTAKPADHLIEGDGELNIGPFHLETLFTPGHSPGSVSYYVKDADLVISGDVLFQGGIGRTDLIGGNQETLLTSIHEKLLTLPEHTLVLSGHGPETDVLTEQDQNPFLNGFSL</sequence>
<organism>
    <name type="scientific">Bacillus subtilis (strain 168)</name>
    <dbReference type="NCBI Taxonomy" id="224308"/>
    <lineage>
        <taxon>Bacteria</taxon>
        <taxon>Bacillati</taxon>
        <taxon>Bacillota</taxon>
        <taxon>Bacilli</taxon>
        <taxon>Bacillales</taxon>
        <taxon>Bacillaceae</taxon>
        <taxon>Bacillus</taxon>
    </lineage>
</organism>
<proteinExistence type="inferred from homology"/>
<comment type="cofactor">
    <cofactor evidence="1">
        <name>Zn(2+)</name>
        <dbReference type="ChEBI" id="CHEBI:29105"/>
    </cofactor>
    <text evidence="1">Binds 2 Zn(2+) ions per subunit.</text>
</comment>
<comment type="similarity">
    <text evidence="2">Belongs to the metallo-beta-lactamase superfamily. Glyoxalase II family.</text>
</comment>
<accession>P54501</accession>
<name>YQGX_BACSU</name>
<protein>
    <recommendedName>
        <fullName>Probable metallo-hydrolase YqgX</fullName>
        <ecNumber>3.-.-.-</ecNumber>
    </recommendedName>
</protein>
<evidence type="ECO:0000250" key="1">
    <source>
        <dbReference type="UniProtKB" id="Q16775"/>
    </source>
</evidence>
<evidence type="ECO:0000305" key="2"/>
<dbReference type="EC" id="3.-.-.-"/>
<dbReference type="EMBL" id="D84432">
    <property type="protein sequence ID" value="BAA12527.1"/>
    <property type="molecule type" value="Genomic_DNA"/>
</dbReference>
<dbReference type="EMBL" id="AL009126">
    <property type="protein sequence ID" value="CAB14410.1"/>
    <property type="molecule type" value="Genomic_DNA"/>
</dbReference>
<dbReference type="PIR" id="A69958">
    <property type="entry name" value="A69958"/>
</dbReference>
<dbReference type="RefSeq" id="NP_390359.1">
    <property type="nucleotide sequence ID" value="NC_000964.3"/>
</dbReference>
<dbReference type="RefSeq" id="WP_009967732.1">
    <property type="nucleotide sequence ID" value="NZ_OZ025638.1"/>
</dbReference>
<dbReference type="SMR" id="P54501"/>
<dbReference type="FunCoup" id="P54501">
    <property type="interactions" value="484"/>
</dbReference>
<dbReference type="STRING" id="224308.BSU24790"/>
<dbReference type="PaxDb" id="224308-BSU24790"/>
<dbReference type="EnsemblBacteria" id="CAB14410">
    <property type="protein sequence ID" value="CAB14410"/>
    <property type="gene ID" value="BSU_24790"/>
</dbReference>
<dbReference type="GeneID" id="938218"/>
<dbReference type="KEGG" id="bsu:BSU24790"/>
<dbReference type="PATRIC" id="fig|224308.179.peg.2698"/>
<dbReference type="eggNOG" id="COG0491">
    <property type="taxonomic scope" value="Bacteria"/>
</dbReference>
<dbReference type="InParanoid" id="P54501"/>
<dbReference type="OrthoDB" id="9802248at2"/>
<dbReference type="PhylomeDB" id="P54501"/>
<dbReference type="BioCyc" id="BSUB:BSU24790-MONOMER"/>
<dbReference type="Proteomes" id="UP000001570">
    <property type="component" value="Chromosome"/>
</dbReference>
<dbReference type="GO" id="GO:0016787">
    <property type="term" value="F:hydrolase activity"/>
    <property type="evidence" value="ECO:0007669"/>
    <property type="project" value="UniProtKB-KW"/>
</dbReference>
<dbReference type="GO" id="GO:0046872">
    <property type="term" value="F:metal ion binding"/>
    <property type="evidence" value="ECO:0007669"/>
    <property type="project" value="UniProtKB-KW"/>
</dbReference>
<dbReference type="CDD" id="cd06262">
    <property type="entry name" value="metallo-hydrolase-like_MBL-fold"/>
    <property type="match status" value="1"/>
</dbReference>
<dbReference type="Gene3D" id="3.60.15.10">
    <property type="entry name" value="Ribonuclease Z/Hydroxyacylglutathione hydrolase-like"/>
    <property type="match status" value="1"/>
</dbReference>
<dbReference type="InterPro" id="IPR051453">
    <property type="entry name" value="MBL_Glyoxalase_II"/>
</dbReference>
<dbReference type="InterPro" id="IPR001279">
    <property type="entry name" value="Metallo-B-lactamas"/>
</dbReference>
<dbReference type="InterPro" id="IPR036866">
    <property type="entry name" value="RibonucZ/Hydroxyglut_hydro"/>
</dbReference>
<dbReference type="PANTHER" id="PTHR46233">
    <property type="entry name" value="HYDROXYACYLGLUTATHIONE HYDROLASE GLOC"/>
    <property type="match status" value="1"/>
</dbReference>
<dbReference type="PANTHER" id="PTHR46233:SF3">
    <property type="entry name" value="HYDROXYACYLGLUTATHIONE HYDROLASE GLOC"/>
    <property type="match status" value="1"/>
</dbReference>
<dbReference type="Pfam" id="PF00753">
    <property type="entry name" value="Lactamase_B"/>
    <property type="match status" value="1"/>
</dbReference>
<dbReference type="SMART" id="SM00849">
    <property type="entry name" value="Lactamase_B"/>
    <property type="match status" value="1"/>
</dbReference>
<dbReference type="SUPFAM" id="SSF56281">
    <property type="entry name" value="Metallo-hydrolase/oxidoreductase"/>
    <property type="match status" value="1"/>
</dbReference>
<keyword id="KW-0378">Hydrolase</keyword>
<keyword id="KW-0479">Metal-binding</keyword>
<keyword id="KW-1185">Reference proteome</keyword>
<keyword id="KW-0862">Zinc</keyword>
<gene>
    <name type="primary">yqgX</name>
    <name type="ordered locus">BSU24790</name>
</gene>